<evidence type="ECO:0000250" key="1">
    <source>
        <dbReference type="UniProtKB" id="P09960"/>
    </source>
</evidence>
<evidence type="ECO:0000250" key="2">
    <source>
        <dbReference type="UniProtKB" id="Q10740"/>
    </source>
</evidence>
<evidence type="ECO:0000255" key="3">
    <source>
        <dbReference type="PROSITE-ProRule" id="PRU10095"/>
    </source>
</evidence>
<evidence type="ECO:0000305" key="4"/>
<gene>
    <name type="primary">LKH1</name>
    <name type="ordered locus">CAALFM_C110490WA</name>
    <name type="ORF">CaO19.8607</name>
    <name type="ORF">CaO19.992</name>
</gene>
<sequence>MTRAIVESIKKRFHELDPCTNSNYSKFKVIHTDLTLTVSFESKTLDGTVVYDLKNLDNASEVILDTSALNIKSTKVNGKEVSFELKPVTPIYGAPLRIPINPNESEIQVEISFTTTDKCTAIQFIQGDTGPYVFSQCEAIHARSLFPCFDTPAVKSPYKFTGHSPAVVTMSGRAQPTDEPNTYHFDQPIPIPSYLVSITSGNLLKAPIGPRSDVYSEEPSLKKCQWEFEKDMENFIQIAEKIVFEYEWSRFDSLVLPSSFPYGGMEIPNMTQLTPTLISGDRTQTKVMAHELAHSWSGNLVTNSSWEHFWLNEGWTVYLERRIIGAIAAAEAKEEGRKDAEKYGEQVRHFNMINGWNELADTCETFDKRYTKLVLDLENGDPDDSFSRIPYEKGFFFLYHLETKLGGIKEFDPFIKYYFNKFKYQSLNTAQFVDTLYEFYEPKGKAEILDNIDWETWLFVSGLPEKPEFDVTLANQVYALVDKWVAYVKNGGELPGDETADFEGEQDMLFLETLTEKFKTLDVKPEIIRLFPEIYPKYGASKNGEIISRWNELLISYGKYSSQDKLVQSFASWLGTIGRMKYVRPGYLLLRKGISHEFALEVFKKYEHIYHPICRTMVKKDLS</sequence>
<reference key="1">
    <citation type="journal article" date="2004" name="Proc. Natl. Acad. Sci. U.S.A.">
        <title>The diploid genome sequence of Candida albicans.</title>
        <authorList>
            <person name="Jones T."/>
            <person name="Federspiel N.A."/>
            <person name="Chibana H."/>
            <person name="Dungan J."/>
            <person name="Kalman S."/>
            <person name="Magee B.B."/>
            <person name="Newport G."/>
            <person name="Thorstenson Y.R."/>
            <person name="Agabian N."/>
            <person name="Magee P.T."/>
            <person name="Davis R.W."/>
            <person name="Scherer S."/>
        </authorList>
    </citation>
    <scope>NUCLEOTIDE SEQUENCE [LARGE SCALE GENOMIC DNA]</scope>
    <source>
        <strain>SC5314 / ATCC MYA-2876</strain>
    </source>
</reference>
<reference key="2">
    <citation type="journal article" date="2007" name="Genome Biol.">
        <title>Assembly of the Candida albicans genome into sixteen supercontigs aligned on the eight chromosomes.</title>
        <authorList>
            <person name="van het Hoog M."/>
            <person name="Rast T.J."/>
            <person name="Martchenko M."/>
            <person name="Grindle S."/>
            <person name="Dignard D."/>
            <person name="Hogues H."/>
            <person name="Cuomo C."/>
            <person name="Berriman M."/>
            <person name="Scherer S."/>
            <person name="Magee B.B."/>
            <person name="Whiteway M."/>
            <person name="Chibana H."/>
            <person name="Nantel A."/>
            <person name="Magee P.T."/>
        </authorList>
    </citation>
    <scope>GENOME REANNOTATION</scope>
    <source>
        <strain>SC5314 / ATCC MYA-2876</strain>
    </source>
</reference>
<reference key="3">
    <citation type="journal article" date="2013" name="Genome Biol.">
        <title>Assembly of a phased diploid Candida albicans genome facilitates allele-specific measurements and provides a simple model for repeat and indel structure.</title>
        <authorList>
            <person name="Muzzey D."/>
            <person name="Schwartz K."/>
            <person name="Weissman J.S."/>
            <person name="Sherlock G."/>
        </authorList>
    </citation>
    <scope>NUCLEOTIDE SEQUENCE [LARGE SCALE GENOMIC DNA]</scope>
    <scope>GENOME REANNOTATION</scope>
    <source>
        <strain>SC5314 / ATCC MYA-2876</strain>
    </source>
</reference>
<name>LKHA4_CANAL</name>
<keyword id="KW-0963">Cytoplasm</keyword>
<keyword id="KW-0378">Hydrolase</keyword>
<keyword id="KW-0479">Metal-binding</keyword>
<keyword id="KW-0482">Metalloprotease</keyword>
<keyword id="KW-0539">Nucleus</keyword>
<keyword id="KW-0645">Protease</keyword>
<keyword id="KW-1185">Reference proteome</keyword>
<keyword id="KW-0862">Zinc</keyword>
<protein>
    <recommendedName>
        <fullName>Leucine aminopeptidase 2</fullName>
        <ecNumber>3.4.11.-</ecNumber>
    </recommendedName>
    <alternativeName>
        <fullName>Epoxide hydrolase</fullName>
        <ecNumber>3.3.2.10</ecNumber>
    </alternativeName>
    <alternativeName>
        <fullName>Leukotriene A-4 hydrolase homolog</fullName>
        <shortName>LTA-4 hydrolase</shortName>
    </alternativeName>
</protein>
<feature type="chain" id="PRO_0000324924" description="Leucine aminopeptidase 2">
    <location>
        <begin position="1"/>
        <end position="623"/>
    </location>
</feature>
<feature type="active site" description="Proton acceptor" evidence="3">
    <location>
        <position position="291"/>
    </location>
</feature>
<feature type="active site" description="Proton donor" evidence="3">
    <location>
        <position position="391"/>
    </location>
</feature>
<feature type="binding site" evidence="1">
    <location>
        <begin position="136"/>
        <end position="138"/>
    </location>
    <ligand>
        <name>a peptide</name>
        <dbReference type="ChEBI" id="CHEBI:60466"/>
    </ligand>
</feature>
<feature type="binding site" evidence="1">
    <location>
        <begin position="261"/>
        <end position="266"/>
    </location>
    <ligand>
        <name>a peptide</name>
        <dbReference type="ChEBI" id="CHEBI:60466"/>
    </ligand>
</feature>
<feature type="binding site" evidence="3">
    <location>
        <position position="290"/>
    </location>
    <ligand>
        <name>Zn(2+)</name>
        <dbReference type="ChEBI" id="CHEBI:29105"/>
        <note>catalytic</note>
    </ligand>
</feature>
<feature type="binding site" evidence="3">
    <location>
        <position position="294"/>
    </location>
    <ligand>
        <name>Zn(2+)</name>
        <dbReference type="ChEBI" id="CHEBI:29105"/>
        <note>catalytic</note>
    </ligand>
</feature>
<feature type="binding site" evidence="3">
    <location>
        <position position="313"/>
    </location>
    <ligand>
        <name>Zn(2+)</name>
        <dbReference type="ChEBI" id="CHEBI:29105"/>
        <note>catalytic</note>
    </ligand>
</feature>
<comment type="function">
    <text evidence="2">Aminopeptidase that preferentially cleaves di- and tripeptides. Also has low epoxide hydrolase activity (in vitro). Can hydrolyze the epoxide leukotriene LTA(4) but it forms preferentially 5,6-dihydroxy-7,9,11,14-eicosatetraenoic acid rather than the cytokine leukotriene B(4) as the product compared to the homologous mammalian enzyme (in vitro).</text>
</comment>
<comment type="catalytic activity">
    <reaction evidence="2">
        <text>an epoxide + H2O = an ethanediol</text>
        <dbReference type="Rhea" id="RHEA:19037"/>
        <dbReference type="ChEBI" id="CHEBI:15377"/>
        <dbReference type="ChEBI" id="CHEBI:32955"/>
        <dbReference type="ChEBI" id="CHEBI:140594"/>
        <dbReference type="EC" id="3.3.2.10"/>
    </reaction>
</comment>
<comment type="cofactor">
    <cofactor evidence="2">
        <name>Zn(2+)</name>
        <dbReference type="ChEBI" id="CHEBI:29105"/>
    </cofactor>
    <text evidence="2">Binds 1 zinc ion per subunit.</text>
</comment>
<comment type="subcellular location">
    <subcellularLocation>
        <location evidence="2">Cytoplasm</location>
    </subcellularLocation>
    <subcellularLocation>
        <location evidence="2">Nucleus</location>
    </subcellularLocation>
</comment>
<comment type="similarity">
    <text evidence="4">Belongs to the peptidase M1 family.</text>
</comment>
<proteinExistence type="inferred from homology"/>
<dbReference type="EC" id="3.4.11.-"/>
<dbReference type="EC" id="3.3.2.10"/>
<dbReference type="EMBL" id="CP017623">
    <property type="protein sequence ID" value="AOW26678.1"/>
    <property type="molecule type" value="Genomic_DNA"/>
</dbReference>
<dbReference type="RefSeq" id="XP_711210.2">
    <property type="nucleotide sequence ID" value="XM_706118.2"/>
</dbReference>
<dbReference type="SMR" id="Q59NB8"/>
<dbReference type="FunCoup" id="Q59NB8">
    <property type="interactions" value="1083"/>
</dbReference>
<dbReference type="STRING" id="237561.Q59NB8"/>
<dbReference type="MEROPS" id="M01.034"/>
<dbReference type="EnsemblFungi" id="C1_10490W_A-T">
    <property type="protein sequence ID" value="C1_10490W_A-T-p1"/>
    <property type="gene ID" value="C1_10490W_A"/>
</dbReference>
<dbReference type="GeneID" id="3647187"/>
<dbReference type="KEGG" id="cal:CAALFM_C110490WA"/>
<dbReference type="CGD" id="CAL0000197502">
    <property type="gene designation" value="LKH1"/>
</dbReference>
<dbReference type="VEuPathDB" id="FungiDB:C1_10490W_A"/>
<dbReference type="eggNOG" id="KOG1047">
    <property type="taxonomic scope" value="Eukaryota"/>
</dbReference>
<dbReference type="HOGENOM" id="CLU_014505_1_2_1"/>
<dbReference type="InParanoid" id="Q59NB8"/>
<dbReference type="OMA" id="FPGNHHP"/>
<dbReference type="OrthoDB" id="79562at2759"/>
<dbReference type="PRO" id="PR:Q59NB8"/>
<dbReference type="Proteomes" id="UP000000559">
    <property type="component" value="Chromosome 1"/>
</dbReference>
<dbReference type="GO" id="GO:0005829">
    <property type="term" value="C:cytosol"/>
    <property type="evidence" value="ECO:0000318"/>
    <property type="project" value="GO_Central"/>
</dbReference>
<dbReference type="GO" id="GO:0000328">
    <property type="term" value="C:fungal-type vacuole lumen"/>
    <property type="evidence" value="ECO:0007669"/>
    <property type="project" value="EnsemblFungi"/>
</dbReference>
<dbReference type="GO" id="GO:0005771">
    <property type="term" value="C:multivesicular body"/>
    <property type="evidence" value="ECO:0007669"/>
    <property type="project" value="EnsemblFungi"/>
</dbReference>
<dbReference type="GO" id="GO:0005634">
    <property type="term" value="C:nucleus"/>
    <property type="evidence" value="ECO:0007669"/>
    <property type="project" value="UniProtKB-SubCell"/>
</dbReference>
<dbReference type="GO" id="GO:0061957">
    <property type="term" value="C:NVT complex"/>
    <property type="evidence" value="ECO:0007669"/>
    <property type="project" value="EnsemblFungi"/>
</dbReference>
<dbReference type="GO" id="GO:0004177">
    <property type="term" value="F:aminopeptidase activity"/>
    <property type="evidence" value="ECO:0000250"/>
    <property type="project" value="UniProtKB"/>
</dbReference>
<dbReference type="GO" id="GO:0004301">
    <property type="term" value="F:epoxide hydrolase activity"/>
    <property type="evidence" value="ECO:0000250"/>
    <property type="project" value="UniProtKB"/>
</dbReference>
<dbReference type="GO" id="GO:0008237">
    <property type="term" value="F:metallopeptidase activity"/>
    <property type="evidence" value="ECO:0007669"/>
    <property type="project" value="UniProtKB-KW"/>
</dbReference>
<dbReference type="GO" id="GO:0008270">
    <property type="term" value="F:zinc ion binding"/>
    <property type="evidence" value="ECO:0000250"/>
    <property type="project" value="UniProtKB"/>
</dbReference>
<dbReference type="GO" id="GO:0120113">
    <property type="term" value="P:cytoplasm to vacuole targeting by the NVT pathway"/>
    <property type="evidence" value="ECO:0007669"/>
    <property type="project" value="EnsemblFungi"/>
</dbReference>
<dbReference type="GO" id="GO:0043171">
    <property type="term" value="P:peptide catabolic process"/>
    <property type="evidence" value="ECO:0000250"/>
    <property type="project" value="UniProtKB"/>
</dbReference>
<dbReference type="GO" id="GO:0006508">
    <property type="term" value="P:proteolysis"/>
    <property type="evidence" value="ECO:0007669"/>
    <property type="project" value="UniProtKB-KW"/>
</dbReference>
<dbReference type="CDD" id="cd09599">
    <property type="entry name" value="M1_LTA4H"/>
    <property type="match status" value="1"/>
</dbReference>
<dbReference type="FunFam" id="1.10.390.10:FF:000009">
    <property type="entry name" value="Leukotriene A(4) hydrolase"/>
    <property type="match status" value="1"/>
</dbReference>
<dbReference type="FunFam" id="1.25.40.320:FF:000001">
    <property type="entry name" value="Leukotriene A(4) hydrolase"/>
    <property type="match status" value="1"/>
</dbReference>
<dbReference type="FunFam" id="3.30.2010.30:FF:000001">
    <property type="entry name" value="Leukotriene A(4) hydrolase"/>
    <property type="match status" value="1"/>
</dbReference>
<dbReference type="Gene3D" id="3.30.2010.30">
    <property type="match status" value="1"/>
</dbReference>
<dbReference type="Gene3D" id="1.10.390.10">
    <property type="entry name" value="Neutral Protease Domain 2"/>
    <property type="match status" value="1"/>
</dbReference>
<dbReference type="Gene3D" id="1.25.40.320">
    <property type="entry name" value="Peptidase M1, leukotriene A4 hydrolase/aminopeptidase C-terminal domain"/>
    <property type="match status" value="1"/>
</dbReference>
<dbReference type="Gene3D" id="2.60.40.1730">
    <property type="entry name" value="tricorn interacting facor f3 domain"/>
    <property type="match status" value="1"/>
</dbReference>
<dbReference type="InterPro" id="IPR045357">
    <property type="entry name" value="Aminopeptidase_N-like_N"/>
</dbReference>
<dbReference type="InterPro" id="IPR042097">
    <property type="entry name" value="Aminopeptidase_N-like_N_sf"/>
</dbReference>
<dbReference type="InterPro" id="IPR016024">
    <property type="entry name" value="ARM-type_fold"/>
</dbReference>
<dbReference type="InterPro" id="IPR012777">
    <property type="entry name" value="LTA4H"/>
</dbReference>
<dbReference type="InterPro" id="IPR049980">
    <property type="entry name" value="LTA4H_cat"/>
</dbReference>
<dbReference type="InterPro" id="IPR038502">
    <property type="entry name" value="M1_LTA-4_hydro/amino_C_sf"/>
</dbReference>
<dbReference type="InterPro" id="IPR034015">
    <property type="entry name" value="M1_LTA4H"/>
</dbReference>
<dbReference type="InterPro" id="IPR001930">
    <property type="entry name" value="Peptidase_M1"/>
</dbReference>
<dbReference type="InterPro" id="IPR015211">
    <property type="entry name" value="Peptidase_M1_C"/>
</dbReference>
<dbReference type="InterPro" id="IPR014782">
    <property type="entry name" value="Peptidase_M1_dom"/>
</dbReference>
<dbReference type="InterPro" id="IPR027268">
    <property type="entry name" value="Peptidase_M4/M1_CTD_sf"/>
</dbReference>
<dbReference type="NCBIfam" id="TIGR02411">
    <property type="entry name" value="leuko_A4_hydro"/>
    <property type="match status" value="1"/>
</dbReference>
<dbReference type="PANTHER" id="PTHR45726">
    <property type="entry name" value="LEUKOTRIENE A-4 HYDROLASE"/>
    <property type="match status" value="1"/>
</dbReference>
<dbReference type="PANTHER" id="PTHR45726:SF3">
    <property type="entry name" value="LEUKOTRIENE A-4 HYDROLASE"/>
    <property type="match status" value="1"/>
</dbReference>
<dbReference type="Pfam" id="PF09127">
    <property type="entry name" value="Leuk-A4-hydro_C"/>
    <property type="match status" value="1"/>
</dbReference>
<dbReference type="Pfam" id="PF01433">
    <property type="entry name" value="Peptidase_M1"/>
    <property type="match status" value="1"/>
</dbReference>
<dbReference type="Pfam" id="PF17900">
    <property type="entry name" value="Peptidase_M1_N"/>
    <property type="match status" value="1"/>
</dbReference>
<dbReference type="PRINTS" id="PR00756">
    <property type="entry name" value="ALADIPTASE"/>
</dbReference>
<dbReference type="SMART" id="SM01263">
    <property type="entry name" value="Leuk-A4-hydro_C"/>
    <property type="match status" value="1"/>
</dbReference>
<dbReference type="SUPFAM" id="SSF48371">
    <property type="entry name" value="ARM repeat"/>
    <property type="match status" value="1"/>
</dbReference>
<dbReference type="SUPFAM" id="SSF63737">
    <property type="entry name" value="Leukotriene A4 hydrolase N-terminal domain"/>
    <property type="match status" value="1"/>
</dbReference>
<dbReference type="SUPFAM" id="SSF55486">
    <property type="entry name" value="Metalloproteases ('zincins'), catalytic domain"/>
    <property type="match status" value="1"/>
</dbReference>
<dbReference type="PROSITE" id="PS00142">
    <property type="entry name" value="ZINC_PROTEASE"/>
    <property type="match status" value="1"/>
</dbReference>
<accession>Q59NB8</accession>
<accession>A0A1D8PEW6</accession>
<organism>
    <name type="scientific">Candida albicans (strain SC5314 / ATCC MYA-2876)</name>
    <name type="common">Yeast</name>
    <dbReference type="NCBI Taxonomy" id="237561"/>
    <lineage>
        <taxon>Eukaryota</taxon>
        <taxon>Fungi</taxon>
        <taxon>Dikarya</taxon>
        <taxon>Ascomycota</taxon>
        <taxon>Saccharomycotina</taxon>
        <taxon>Pichiomycetes</taxon>
        <taxon>Debaryomycetaceae</taxon>
        <taxon>Candida/Lodderomyces clade</taxon>
        <taxon>Candida</taxon>
    </lineage>
</organism>